<sequence>MKHIRNFSIIAHIDHGKSTLSDRLIQVCGGLSDREMAEQVLDSMDLERERGITIKAQSVTLDYTAKDGQTYQLNFIDTPGHVDFAYEVSRSLAACEGALLVVDAGQGVEAQTLANCYTAIEMDLEVVPILNKIDLPAAEPERVAEEIEDIVGIDAIDAVRCSAKTGVGVDEVLEKIVSAIPAPQGDPDAPLQALIIDSWFDNYLGVVSLVRIKNGSLKKNDKIKVMSTGQTWGVDRLGIFTPKQVDTDSLDTGEVGWVVCGIKDIMGAPVGDTLTLAKNGCEKALPGFKKVKPQVYAGLFPVSSDDYDNFRDALGKLSLNDASLFYEPETSAALGFGFRCGFLGMLHMEIIQERLEREYDLDLITTAPTVVYEVLKTNKEIVYVDSPAKLPAINDIEEIREPIARCNILVPADYLGNVITLCIEKRGTQVDMVYHGNQVALTYDIPMAEVVLDFFDRLKSTSRGYASLDYGFQRFEMSHMVRVDVLLNGDKVDALAIITHRDNSQTRGRQLVEKMKEFIPRQMFDIAIQAAIGNHIIARSTVKQLRKNVLAKCYGGDVSRKKKLLKKQKEGKKRMKQIGNVELPQEAFLAILHVGKD</sequence>
<feature type="chain" id="PRO_1000190836" description="Elongation factor 4">
    <location>
        <begin position="1"/>
        <end position="597"/>
    </location>
</feature>
<feature type="domain" description="tr-type G">
    <location>
        <begin position="2"/>
        <end position="184"/>
    </location>
</feature>
<feature type="binding site" evidence="1">
    <location>
        <begin position="14"/>
        <end position="19"/>
    </location>
    <ligand>
        <name>GTP</name>
        <dbReference type="ChEBI" id="CHEBI:37565"/>
    </ligand>
</feature>
<feature type="binding site" evidence="1">
    <location>
        <begin position="131"/>
        <end position="134"/>
    </location>
    <ligand>
        <name>GTP</name>
        <dbReference type="ChEBI" id="CHEBI:37565"/>
    </ligand>
</feature>
<organism>
    <name type="scientific">Vibrio cholerae serotype O1 (strain M66-2)</name>
    <dbReference type="NCBI Taxonomy" id="579112"/>
    <lineage>
        <taxon>Bacteria</taxon>
        <taxon>Pseudomonadati</taxon>
        <taxon>Pseudomonadota</taxon>
        <taxon>Gammaproteobacteria</taxon>
        <taxon>Vibrionales</taxon>
        <taxon>Vibrionaceae</taxon>
        <taxon>Vibrio</taxon>
    </lineage>
</organism>
<keyword id="KW-0997">Cell inner membrane</keyword>
<keyword id="KW-1003">Cell membrane</keyword>
<keyword id="KW-0342">GTP-binding</keyword>
<keyword id="KW-0378">Hydrolase</keyword>
<keyword id="KW-0472">Membrane</keyword>
<keyword id="KW-0547">Nucleotide-binding</keyword>
<keyword id="KW-0648">Protein biosynthesis</keyword>
<reference key="1">
    <citation type="journal article" date="2008" name="PLoS ONE">
        <title>A recalibrated molecular clock and independent origins for the cholera pandemic clones.</title>
        <authorList>
            <person name="Feng L."/>
            <person name="Reeves P.R."/>
            <person name="Lan R."/>
            <person name="Ren Y."/>
            <person name="Gao C."/>
            <person name="Zhou Z."/>
            <person name="Ren Y."/>
            <person name="Cheng J."/>
            <person name="Wang W."/>
            <person name="Wang J."/>
            <person name="Qian W."/>
            <person name="Li D."/>
            <person name="Wang L."/>
        </authorList>
    </citation>
    <scope>NUCLEOTIDE SEQUENCE [LARGE SCALE GENOMIC DNA]</scope>
    <source>
        <strain>M66-2</strain>
    </source>
</reference>
<comment type="function">
    <text evidence="1">Required for accurate and efficient protein synthesis under certain stress conditions. May act as a fidelity factor of the translation reaction, by catalyzing a one-codon backward translocation of tRNAs on improperly translocated ribosomes. Back-translocation proceeds from a post-translocation (POST) complex to a pre-translocation (PRE) complex, thus giving elongation factor G a second chance to translocate the tRNAs correctly. Binds to ribosomes in a GTP-dependent manner.</text>
</comment>
<comment type="catalytic activity">
    <reaction evidence="1">
        <text>GTP + H2O = GDP + phosphate + H(+)</text>
        <dbReference type="Rhea" id="RHEA:19669"/>
        <dbReference type="ChEBI" id="CHEBI:15377"/>
        <dbReference type="ChEBI" id="CHEBI:15378"/>
        <dbReference type="ChEBI" id="CHEBI:37565"/>
        <dbReference type="ChEBI" id="CHEBI:43474"/>
        <dbReference type="ChEBI" id="CHEBI:58189"/>
        <dbReference type="EC" id="3.6.5.n1"/>
    </reaction>
</comment>
<comment type="subcellular location">
    <subcellularLocation>
        <location evidence="1">Cell inner membrane</location>
        <topology evidence="1">Peripheral membrane protein</topology>
        <orientation evidence="1">Cytoplasmic side</orientation>
    </subcellularLocation>
</comment>
<comment type="similarity">
    <text evidence="1">Belongs to the TRAFAC class translation factor GTPase superfamily. Classic translation factor GTPase family. LepA subfamily.</text>
</comment>
<name>LEPA_VIBCM</name>
<proteinExistence type="inferred from homology"/>
<dbReference type="EC" id="3.6.5.n1" evidence="1"/>
<dbReference type="EMBL" id="CP001233">
    <property type="protein sequence ID" value="ACP06684.1"/>
    <property type="molecule type" value="Genomic_DNA"/>
</dbReference>
<dbReference type="RefSeq" id="WP_000680632.1">
    <property type="nucleotide sequence ID" value="NC_012578.1"/>
</dbReference>
<dbReference type="SMR" id="C3LR06"/>
<dbReference type="GeneID" id="69718931"/>
<dbReference type="KEGG" id="vcm:VCM66_2386"/>
<dbReference type="HOGENOM" id="CLU_009995_3_3_6"/>
<dbReference type="Proteomes" id="UP000001217">
    <property type="component" value="Chromosome I"/>
</dbReference>
<dbReference type="GO" id="GO:0005886">
    <property type="term" value="C:plasma membrane"/>
    <property type="evidence" value="ECO:0007669"/>
    <property type="project" value="UniProtKB-SubCell"/>
</dbReference>
<dbReference type="GO" id="GO:0005525">
    <property type="term" value="F:GTP binding"/>
    <property type="evidence" value="ECO:0007669"/>
    <property type="project" value="UniProtKB-UniRule"/>
</dbReference>
<dbReference type="GO" id="GO:0003924">
    <property type="term" value="F:GTPase activity"/>
    <property type="evidence" value="ECO:0007669"/>
    <property type="project" value="UniProtKB-UniRule"/>
</dbReference>
<dbReference type="GO" id="GO:0097216">
    <property type="term" value="F:guanosine tetraphosphate binding"/>
    <property type="evidence" value="ECO:0007669"/>
    <property type="project" value="UniProtKB-ARBA"/>
</dbReference>
<dbReference type="GO" id="GO:0043022">
    <property type="term" value="F:ribosome binding"/>
    <property type="evidence" value="ECO:0007669"/>
    <property type="project" value="UniProtKB-UniRule"/>
</dbReference>
<dbReference type="GO" id="GO:0003746">
    <property type="term" value="F:translation elongation factor activity"/>
    <property type="evidence" value="ECO:0007669"/>
    <property type="project" value="UniProtKB-UniRule"/>
</dbReference>
<dbReference type="GO" id="GO:0045727">
    <property type="term" value="P:positive regulation of translation"/>
    <property type="evidence" value="ECO:0007669"/>
    <property type="project" value="UniProtKB-UniRule"/>
</dbReference>
<dbReference type="CDD" id="cd03699">
    <property type="entry name" value="EF4_II"/>
    <property type="match status" value="1"/>
</dbReference>
<dbReference type="CDD" id="cd16260">
    <property type="entry name" value="EF4_III"/>
    <property type="match status" value="1"/>
</dbReference>
<dbReference type="CDD" id="cd01890">
    <property type="entry name" value="LepA"/>
    <property type="match status" value="1"/>
</dbReference>
<dbReference type="CDD" id="cd03709">
    <property type="entry name" value="lepA_C"/>
    <property type="match status" value="1"/>
</dbReference>
<dbReference type="FunFam" id="3.40.50.300:FF:000078">
    <property type="entry name" value="Elongation factor 4"/>
    <property type="match status" value="1"/>
</dbReference>
<dbReference type="FunFam" id="2.40.30.10:FF:000015">
    <property type="entry name" value="Translation factor GUF1, mitochondrial"/>
    <property type="match status" value="1"/>
</dbReference>
<dbReference type="FunFam" id="3.30.70.240:FF:000007">
    <property type="entry name" value="Translation factor GUF1, mitochondrial"/>
    <property type="match status" value="1"/>
</dbReference>
<dbReference type="FunFam" id="3.30.70.2570:FF:000001">
    <property type="entry name" value="Translation factor GUF1, mitochondrial"/>
    <property type="match status" value="1"/>
</dbReference>
<dbReference type="FunFam" id="3.30.70.870:FF:000004">
    <property type="entry name" value="Translation factor GUF1, mitochondrial"/>
    <property type="match status" value="1"/>
</dbReference>
<dbReference type="Gene3D" id="3.30.70.240">
    <property type="match status" value="1"/>
</dbReference>
<dbReference type="Gene3D" id="3.30.70.2570">
    <property type="entry name" value="Elongation factor 4, C-terminal domain"/>
    <property type="match status" value="1"/>
</dbReference>
<dbReference type="Gene3D" id="3.30.70.870">
    <property type="entry name" value="Elongation Factor G (Translational Gtpase), domain 3"/>
    <property type="match status" value="1"/>
</dbReference>
<dbReference type="Gene3D" id="3.40.50.300">
    <property type="entry name" value="P-loop containing nucleotide triphosphate hydrolases"/>
    <property type="match status" value="1"/>
</dbReference>
<dbReference type="Gene3D" id="2.40.30.10">
    <property type="entry name" value="Translation factors"/>
    <property type="match status" value="1"/>
</dbReference>
<dbReference type="HAMAP" id="MF_00071">
    <property type="entry name" value="LepA"/>
    <property type="match status" value="1"/>
</dbReference>
<dbReference type="InterPro" id="IPR006297">
    <property type="entry name" value="EF-4"/>
</dbReference>
<dbReference type="InterPro" id="IPR035647">
    <property type="entry name" value="EFG_III/V"/>
</dbReference>
<dbReference type="InterPro" id="IPR000640">
    <property type="entry name" value="EFG_V-like"/>
</dbReference>
<dbReference type="InterPro" id="IPR004161">
    <property type="entry name" value="EFTu-like_2"/>
</dbReference>
<dbReference type="InterPro" id="IPR031157">
    <property type="entry name" value="G_TR_CS"/>
</dbReference>
<dbReference type="InterPro" id="IPR038363">
    <property type="entry name" value="LepA_C_sf"/>
</dbReference>
<dbReference type="InterPro" id="IPR013842">
    <property type="entry name" value="LepA_CTD"/>
</dbReference>
<dbReference type="InterPro" id="IPR035654">
    <property type="entry name" value="LepA_IV"/>
</dbReference>
<dbReference type="InterPro" id="IPR027417">
    <property type="entry name" value="P-loop_NTPase"/>
</dbReference>
<dbReference type="InterPro" id="IPR005225">
    <property type="entry name" value="Small_GTP-bd"/>
</dbReference>
<dbReference type="InterPro" id="IPR000795">
    <property type="entry name" value="T_Tr_GTP-bd_dom"/>
</dbReference>
<dbReference type="InterPro" id="IPR009000">
    <property type="entry name" value="Transl_B-barrel_sf"/>
</dbReference>
<dbReference type="NCBIfam" id="TIGR01393">
    <property type="entry name" value="lepA"/>
    <property type="match status" value="1"/>
</dbReference>
<dbReference type="NCBIfam" id="TIGR00231">
    <property type="entry name" value="small_GTP"/>
    <property type="match status" value="1"/>
</dbReference>
<dbReference type="PANTHER" id="PTHR43512:SF4">
    <property type="entry name" value="TRANSLATION FACTOR GUF1 HOMOLOG, CHLOROPLASTIC"/>
    <property type="match status" value="1"/>
</dbReference>
<dbReference type="PANTHER" id="PTHR43512">
    <property type="entry name" value="TRANSLATION FACTOR GUF1-RELATED"/>
    <property type="match status" value="1"/>
</dbReference>
<dbReference type="Pfam" id="PF00679">
    <property type="entry name" value="EFG_C"/>
    <property type="match status" value="1"/>
</dbReference>
<dbReference type="Pfam" id="PF00009">
    <property type="entry name" value="GTP_EFTU"/>
    <property type="match status" value="1"/>
</dbReference>
<dbReference type="Pfam" id="PF03144">
    <property type="entry name" value="GTP_EFTU_D2"/>
    <property type="match status" value="1"/>
</dbReference>
<dbReference type="Pfam" id="PF06421">
    <property type="entry name" value="LepA_C"/>
    <property type="match status" value="1"/>
</dbReference>
<dbReference type="PRINTS" id="PR00315">
    <property type="entry name" value="ELONGATNFCT"/>
</dbReference>
<dbReference type="SUPFAM" id="SSF54980">
    <property type="entry name" value="EF-G C-terminal domain-like"/>
    <property type="match status" value="2"/>
</dbReference>
<dbReference type="SUPFAM" id="SSF52540">
    <property type="entry name" value="P-loop containing nucleoside triphosphate hydrolases"/>
    <property type="match status" value="1"/>
</dbReference>
<dbReference type="SUPFAM" id="SSF50447">
    <property type="entry name" value="Translation proteins"/>
    <property type="match status" value="1"/>
</dbReference>
<dbReference type="PROSITE" id="PS00301">
    <property type="entry name" value="G_TR_1"/>
    <property type="match status" value="1"/>
</dbReference>
<dbReference type="PROSITE" id="PS51722">
    <property type="entry name" value="G_TR_2"/>
    <property type="match status" value="1"/>
</dbReference>
<evidence type="ECO:0000255" key="1">
    <source>
        <dbReference type="HAMAP-Rule" id="MF_00071"/>
    </source>
</evidence>
<accession>C3LR06</accession>
<protein>
    <recommendedName>
        <fullName evidence="1">Elongation factor 4</fullName>
        <shortName evidence="1">EF-4</shortName>
        <ecNumber evidence="1">3.6.5.n1</ecNumber>
    </recommendedName>
    <alternativeName>
        <fullName evidence="1">Ribosomal back-translocase LepA</fullName>
    </alternativeName>
</protein>
<gene>
    <name evidence="1" type="primary">lepA</name>
    <name type="ordered locus">VCM66_2386</name>
</gene>